<organism>
    <name type="scientific">Yersinia pestis bv. Antiqua (strain Nepal516)</name>
    <dbReference type="NCBI Taxonomy" id="377628"/>
    <lineage>
        <taxon>Bacteria</taxon>
        <taxon>Pseudomonadati</taxon>
        <taxon>Pseudomonadota</taxon>
        <taxon>Gammaproteobacteria</taxon>
        <taxon>Enterobacterales</taxon>
        <taxon>Yersiniaceae</taxon>
        <taxon>Yersinia</taxon>
    </lineage>
</organism>
<keyword id="KW-0021">Allosteric enzyme</keyword>
<keyword id="KW-0328">Glycosyltransferase</keyword>
<keyword id="KW-0342">GTP-binding</keyword>
<keyword id="KW-0460">Magnesium</keyword>
<keyword id="KW-0547">Nucleotide-binding</keyword>
<keyword id="KW-0808">Transferase</keyword>
<feature type="chain" id="PRO_1000053815" description="Uracil phosphoribosyltransferase">
    <location>
        <begin position="1"/>
        <end position="208"/>
    </location>
</feature>
<feature type="binding site" evidence="1">
    <location>
        <position position="78"/>
    </location>
    <ligand>
        <name>5-phospho-alpha-D-ribose 1-diphosphate</name>
        <dbReference type="ChEBI" id="CHEBI:58017"/>
    </ligand>
</feature>
<feature type="binding site" evidence="1">
    <location>
        <position position="103"/>
    </location>
    <ligand>
        <name>5-phospho-alpha-D-ribose 1-diphosphate</name>
        <dbReference type="ChEBI" id="CHEBI:58017"/>
    </ligand>
</feature>
<feature type="binding site" evidence="1">
    <location>
        <begin position="130"/>
        <end position="138"/>
    </location>
    <ligand>
        <name>5-phospho-alpha-D-ribose 1-diphosphate</name>
        <dbReference type="ChEBI" id="CHEBI:58017"/>
    </ligand>
</feature>
<feature type="binding site" evidence="1">
    <location>
        <position position="193"/>
    </location>
    <ligand>
        <name>uracil</name>
        <dbReference type="ChEBI" id="CHEBI:17568"/>
    </ligand>
</feature>
<feature type="binding site" evidence="1">
    <location>
        <begin position="198"/>
        <end position="200"/>
    </location>
    <ligand>
        <name>uracil</name>
        <dbReference type="ChEBI" id="CHEBI:17568"/>
    </ligand>
</feature>
<feature type="binding site" evidence="1">
    <location>
        <position position="199"/>
    </location>
    <ligand>
        <name>5-phospho-alpha-D-ribose 1-diphosphate</name>
        <dbReference type="ChEBI" id="CHEBI:58017"/>
    </ligand>
</feature>
<reference key="1">
    <citation type="journal article" date="2006" name="J. Bacteriol.">
        <title>Complete genome sequence of Yersinia pestis strains Antiqua and Nepal516: evidence of gene reduction in an emerging pathogen.</title>
        <authorList>
            <person name="Chain P.S.G."/>
            <person name="Hu P."/>
            <person name="Malfatti S.A."/>
            <person name="Radnedge L."/>
            <person name="Larimer F."/>
            <person name="Vergez L.M."/>
            <person name="Worsham P."/>
            <person name="Chu M.C."/>
            <person name="Andersen G.L."/>
        </authorList>
    </citation>
    <scope>NUCLEOTIDE SEQUENCE [LARGE SCALE GENOMIC DNA]</scope>
    <source>
        <strain>Nepal516</strain>
    </source>
</reference>
<reference key="2">
    <citation type="submission" date="2009-04" db="EMBL/GenBank/DDBJ databases">
        <title>Yersinia pestis Nepal516A whole genome shotgun sequencing project.</title>
        <authorList>
            <person name="Plunkett G. III"/>
            <person name="Anderson B.D."/>
            <person name="Baumler D.J."/>
            <person name="Burland V."/>
            <person name="Cabot E.L."/>
            <person name="Glasner J.D."/>
            <person name="Mau B."/>
            <person name="Neeno-Eckwall E."/>
            <person name="Perna N.T."/>
            <person name="Munk A.C."/>
            <person name="Tapia R."/>
            <person name="Green L.D."/>
            <person name="Rogers Y.C."/>
            <person name="Detter J.C."/>
            <person name="Bruce D.C."/>
            <person name="Brettin T.S."/>
        </authorList>
    </citation>
    <scope>NUCLEOTIDE SEQUENCE [LARGE SCALE GENOMIC DNA]</scope>
    <source>
        <strain>Nepal516</strain>
    </source>
</reference>
<name>UPP_YERPN</name>
<protein>
    <recommendedName>
        <fullName evidence="1">Uracil phosphoribosyltransferase</fullName>
        <ecNumber evidence="1">2.4.2.9</ecNumber>
    </recommendedName>
    <alternativeName>
        <fullName evidence="1">UMP pyrophosphorylase</fullName>
    </alternativeName>
    <alternativeName>
        <fullName evidence="1">UPRTase</fullName>
    </alternativeName>
</protein>
<comment type="function">
    <text evidence="1">Catalyzes the conversion of uracil and 5-phospho-alpha-D-ribose 1-diphosphate (PRPP) to UMP and diphosphate.</text>
</comment>
<comment type="catalytic activity">
    <reaction evidence="1">
        <text>UMP + diphosphate = 5-phospho-alpha-D-ribose 1-diphosphate + uracil</text>
        <dbReference type="Rhea" id="RHEA:13017"/>
        <dbReference type="ChEBI" id="CHEBI:17568"/>
        <dbReference type="ChEBI" id="CHEBI:33019"/>
        <dbReference type="ChEBI" id="CHEBI:57865"/>
        <dbReference type="ChEBI" id="CHEBI:58017"/>
        <dbReference type="EC" id="2.4.2.9"/>
    </reaction>
</comment>
<comment type="cofactor">
    <cofactor evidence="1">
        <name>Mg(2+)</name>
        <dbReference type="ChEBI" id="CHEBI:18420"/>
    </cofactor>
    <text evidence="1">Binds 1 Mg(2+) ion per subunit. The magnesium is bound as Mg-PRPP.</text>
</comment>
<comment type="activity regulation">
    <text evidence="1">Allosterically activated by GTP.</text>
</comment>
<comment type="pathway">
    <text evidence="1">Pyrimidine metabolism; UMP biosynthesis via salvage pathway; UMP from uracil: step 1/1.</text>
</comment>
<comment type="similarity">
    <text evidence="1">Belongs to the UPRTase family.</text>
</comment>
<accession>Q1CK39</accession>
<accession>C4GRR7</accession>
<sequence>MKIVEVKHPLVKHKLGLMRENDISTKRFRELASEVGSLLTYVATADLETETVTIEGWNGPVEIEQIKGKKITVVPILRAGLGMMEGVLENVPSARISVVGVYRDEETLKPVPYFQKLVSNINERMALVVDPMLATGGSMIATIDLLKKAGCQSIKVLVLVAAPEGIKALEEAHPDVELYTASIDQGLNEHGYIIPGLGDAGDKIFGTK</sequence>
<proteinExistence type="inferred from homology"/>
<dbReference type="EC" id="2.4.2.9" evidence="1"/>
<dbReference type="EMBL" id="CP000305">
    <property type="protein sequence ID" value="ABG17641.1"/>
    <property type="molecule type" value="Genomic_DNA"/>
</dbReference>
<dbReference type="EMBL" id="ACNQ01000008">
    <property type="protein sequence ID" value="EEO77758.1"/>
    <property type="molecule type" value="Genomic_DNA"/>
</dbReference>
<dbReference type="RefSeq" id="WP_002209776.1">
    <property type="nucleotide sequence ID" value="NZ_ACNQ01000008.1"/>
</dbReference>
<dbReference type="SMR" id="Q1CK39"/>
<dbReference type="GeneID" id="96666287"/>
<dbReference type="KEGG" id="ypn:YPN_1311"/>
<dbReference type="HOGENOM" id="CLU_067096_2_2_6"/>
<dbReference type="UniPathway" id="UPA00574">
    <property type="reaction ID" value="UER00636"/>
</dbReference>
<dbReference type="Proteomes" id="UP000008936">
    <property type="component" value="Chromosome"/>
</dbReference>
<dbReference type="GO" id="GO:0005525">
    <property type="term" value="F:GTP binding"/>
    <property type="evidence" value="ECO:0007669"/>
    <property type="project" value="UniProtKB-KW"/>
</dbReference>
<dbReference type="GO" id="GO:0000287">
    <property type="term" value="F:magnesium ion binding"/>
    <property type="evidence" value="ECO:0007669"/>
    <property type="project" value="UniProtKB-UniRule"/>
</dbReference>
<dbReference type="GO" id="GO:0004845">
    <property type="term" value="F:uracil phosphoribosyltransferase activity"/>
    <property type="evidence" value="ECO:0007669"/>
    <property type="project" value="UniProtKB-UniRule"/>
</dbReference>
<dbReference type="GO" id="GO:0044206">
    <property type="term" value="P:UMP salvage"/>
    <property type="evidence" value="ECO:0007669"/>
    <property type="project" value="UniProtKB-UniRule"/>
</dbReference>
<dbReference type="GO" id="GO:0006223">
    <property type="term" value="P:uracil salvage"/>
    <property type="evidence" value="ECO:0007669"/>
    <property type="project" value="InterPro"/>
</dbReference>
<dbReference type="CDD" id="cd06223">
    <property type="entry name" value="PRTases_typeI"/>
    <property type="match status" value="1"/>
</dbReference>
<dbReference type="FunFam" id="3.40.50.2020:FF:000003">
    <property type="entry name" value="Uracil phosphoribosyltransferase"/>
    <property type="match status" value="1"/>
</dbReference>
<dbReference type="Gene3D" id="3.40.50.2020">
    <property type="match status" value="1"/>
</dbReference>
<dbReference type="HAMAP" id="MF_01218_B">
    <property type="entry name" value="Upp_B"/>
    <property type="match status" value="1"/>
</dbReference>
<dbReference type="InterPro" id="IPR000836">
    <property type="entry name" value="PRibTrfase_dom"/>
</dbReference>
<dbReference type="InterPro" id="IPR029057">
    <property type="entry name" value="PRTase-like"/>
</dbReference>
<dbReference type="InterPro" id="IPR034332">
    <property type="entry name" value="Upp_B"/>
</dbReference>
<dbReference type="InterPro" id="IPR050054">
    <property type="entry name" value="UPRTase/APRTase"/>
</dbReference>
<dbReference type="InterPro" id="IPR005765">
    <property type="entry name" value="Ura_phspho_trans"/>
</dbReference>
<dbReference type="NCBIfam" id="NF001097">
    <property type="entry name" value="PRK00129.1"/>
    <property type="match status" value="1"/>
</dbReference>
<dbReference type="NCBIfam" id="TIGR01091">
    <property type="entry name" value="upp"/>
    <property type="match status" value="1"/>
</dbReference>
<dbReference type="PANTHER" id="PTHR32315">
    <property type="entry name" value="ADENINE PHOSPHORIBOSYLTRANSFERASE"/>
    <property type="match status" value="1"/>
</dbReference>
<dbReference type="PANTHER" id="PTHR32315:SF4">
    <property type="entry name" value="URACIL PHOSPHORIBOSYLTRANSFERASE, CHLOROPLASTIC"/>
    <property type="match status" value="1"/>
</dbReference>
<dbReference type="Pfam" id="PF14681">
    <property type="entry name" value="UPRTase"/>
    <property type="match status" value="1"/>
</dbReference>
<dbReference type="SUPFAM" id="SSF53271">
    <property type="entry name" value="PRTase-like"/>
    <property type="match status" value="1"/>
</dbReference>
<gene>
    <name evidence="1" type="primary">upp</name>
    <name type="ordered locus">YPN_1311</name>
    <name type="ORF">YP516_1443</name>
</gene>
<evidence type="ECO:0000255" key="1">
    <source>
        <dbReference type="HAMAP-Rule" id="MF_01218"/>
    </source>
</evidence>